<gene>
    <name evidence="1" type="primary">pyrD</name>
    <name type="ordered locus">SG1018</name>
</gene>
<reference key="1">
    <citation type="journal article" date="2006" name="Genome Res.">
        <title>Massive genome erosion and functional adaptations provide insights into the symbiotic lifestyle of Sodalis glossinidius in the tsetse host.</title>
        <authorList>
            <person name="Toh H."/>
            <person name="Weiss B.L."/>
            <person name="Perkin S.A.H."/>
            <person name="Yamashita A."/>
            <person name="Oshima K."/>
            <person name="Hattori M."/>
            <person name="Aksoy S."/>
        </authorList>
    </citation>
    <scope>NUCLEOTIDE SEQUENCE [LARGE SCALE GENOMIC DNA]</scope>
    <source>
        <strain>morsitans</strain>
    </source>
</reference>
<sequence>MLYPLIKQALFQLDPERAHELTFQQLKRITGTPLEWLVRQSVPTKTVNCMGIAFKNPLGLAAGLDKDGDCIDALGAMGFGFIEVGTVTPRAQPGNEKPRLFRLVKAGGLINRMGFNNHGVDNLVENVRKSHFGGVLGINIGKNKDTPVEQGKDDYLTCMEKVYPYAGYIAVNISSPNTPGLRTLQFGEALDDLLLAIKNKQVALQAYHHKYVPVAVKIAPDMTEAELIQVADSLVRHNIDGVIATNTTTGRVLVQGMNHCGQTGGLSGRPLQLRSTEVIRQLSAELQGKLPIIGGGGIDSLIAAREKMAAGASLIQIYSGFIFHGPRLIKDIVSDI</sequence>
<comment type="function">
    <text evidence="1">Catalyzes the conversion of dihydroorotate to orotate with quinone as electron acceptor.</text>
</comment>
<comment type="catalytic activity">
    <reaction evidence="1">
        <text>(S)-dihydroorotate + a quinone = orotate + a quinol</text>
        <dbReference type="Rhea" id="RHEA:30187"/>
        <dbReference type="ChEBI" id="CHEBI:24646"/>
        <dbReference type="ChEBI" id="CHEBI:30839"/>
        <dbReference type="ChEBI" id="CHEBI:30864"/>
        <dbReference type="ChEBI" id="CHEBI:132124"/>
        <dbReference type="EC" id="1.3.5.2"/>
    </reaction>
</comment>
<comment type="cofactor">
    <cofactor evidence="1">
        <name>FMN</name>
        <dbReference type="ChEBI" id="CHEBI:58210"/>
    </cofactor>
    <text evidence="1">Binds 1 FMN per subunit.</text>
</comment>
<comment type="pathway">
    <text evidence="1">Pyrimidine metabolism; UMP biosynthesis via de novo pathway; orotate from (S)-dihydroorotate (quinone route): step 1/1.</text>
</comment>
<comment type="subunit">
    <text evidence="1">Monomer.</text>
</comment>
<comment type="subcellular location">
    <subcellularLocation>
        <location evidence="1">Cell membrane</location>
        <topology evidence="1">Peripheral membrane protein</topology>
    </subcellularLocation>
</comment>
<comment type="similarity">
    <text evidence="1">Belongs to the dihydroorotate dehydrogenase family. Type 2 subfamily.</text>
</comment>
<accession>Q2NU82</accession>
<keyword id="KW-1003">Cell membrane</keyword>
<keyword id="KW-0285">Flavoprotein</keyword>
<keyword id="KW-0288">FMN</keyword>
<keyword id="KW-0472">Membrane</keyword>
<keyword id="KW-0560">Oxidoreductase</keyword>
<keyword id="KW-0665">Pyrimidine biosynthesis</keyword>
<proteinExistence type="inferred from homology"/>
<dbReference type="EC" id="1.3.5.2" evidence="1"/>
<dbReference type="EMBL" id="AP008232">
    <property type="protein sequence ID" value="BAE74293.1"/>
    <property type="molecule type" value="Genomic_DNA"/>
</dbReference>
<dbReference type="RefSeq" id="WP_011410878.1">
    <property type="nucleotide sequence ID" value="NC_007712.1"/>
</dbReference>
<dbReference type="SMR" id="Q2NU82"/>
<dbReference type="STRING" id="343509.SG1018"/>
<dbReference type="KEGG" id="sgl:SG1018"/>
<dbReference type="eggNOG" id="COG0167">
    <property type="taxonomic scope" value="Bacteria"/>
</dbReference>
<dbReference type="HOGENOM" id="CLU_013640_2_0_6"/>
<dbReference type="OrthoDB" id="9802377at2"/>
<dbReference type="BioCyc" id="SGLO343509:SGP1_RS08750-MONOMER"/>
<dbReference type="UniPathway" id="UPA00070">
    <property type="reaction ID" value="UER00946"/>
</dbReference>
<dbReference type="Proteomes" id="UP000001932">
    <property type="component" value="Chromosome"/>
</dbReference>
<dbReference type="GO" id="GO:0005737">
    <property type="term" value="C:cytoplasm"/>
    <property type="evidence" value="ECO:0007669"/>
    <property type="project" value="InterPro"/>
</dbReference>
<dbReference type="GO" id="GO:0005886">
    <property type="term" value="C:plasma membrane"/>
    <property type="evidence" value="ECO:0007669"/>
    <property type="project" value="UniProtKB-SubCell"/>
</dbReference>
<dbReference type="GO" id="GO:0106430">
    <property type="term" value="F:dihydroorotate dehydrogenase (quinone) activity"/>
    <property type="evidence" value="ECO:0007669"/>
    <property type="project" value="UniProtKB-EC"/>
</dbReference>
<dbReference type="GO" id="GO:0006207">
    <property type="term" value="P:'de novo' pyrimidine nucleobase biosynthetic process"/>
    <property type="evidence" value="ECO:0007669"/>
    <property type="project" value="InterPro"/>
</dbReference>
<dbReference type="GO" id="GO:0044205">
    <property type="term" value="P:'de novo' UMP biosynthetic process"/>
    <property type="evidence" value="ECO:0007669"/>
    <property type="project" value="UniProtKB-UniRule"/>
</dbReference>
<dbReference type="CDD" id="cd04738">
    <property type="entry name" value="DHOD_2_like"/>
    <property type="match status" value="1"/>
</dbReference>
<dbReference type="FunFam" id="3.20.20.70:FF:000028">
    <property type="entry name" value="Dihydroorotate dehydrogenase (quinone)"/>
    <property type="match status" value="1"/>
</dbReference>
<dbReference type="Gene3D" id="3.20.20.70">
    <property type="entry name" value="Aldolase class I"/>
    <property type="match status" value="1"/>
</dbReference>
<dbReference type="HAMAP" id="MF_00225">
    <property type="entry name" value="DHO_dh_type2"/>
    <property type="match status" value="1"/>
</dbReference>
<dbReference type="InterPro" id="IPR013785">
    <property type="entry name" value="Aldolase_TIM"/>
</dbReference>
<dbReference type="InterPro" id="IPR050074">
    <property type="entry name" value="DHO_dehydrogenase"/>
</dbReference>
<dbReference type="InterPro" id="IPR012135">
    <property type="entry name" value="Dihydroorotate_DH_1_2"/>
</dbReference>
<dbReference type="InterPro" id="IPR005719">
    <property type="entry name" value="Dihydroorotate_DH_2"/>
</dbReference>
<dbReference type="InterPro" id="IPR005720">
    <property type="entry name" value="Dihydroorotate_DH_cat"/>
</dbReference>
<dbReference type="InterPro" id="IPR001295">
    <property type="entry name" value="Dihydroorotate_DH_CS"/>
</dbReference>
<dbReference type="NCBIfam" id="NF003644">
    <property type="entry name" value="PRK05286.1-1"/>
    <property type="match status" value="1"/>
</dbReference>
<dbReference type="NCBIfam" id="NF003645">
    <property type="entry name" value="PRK05286.1-2"/>
    <property type="match status" value="1"/>
</dbReference>
<dbReference type="NCBIfam" id="NF003646">
    <property type="entry name" value="PRK05286.1-4"/>
    <property type="match status" value="1"/>
</dbReference>
<dbReference type="NCBIfam" id="NF003652">
    <property type="entry name" value="PRK05286.2-5"/>
    <property type="match status" value="1"/>
</dbReference>
<dbReference type="NCBIfam" id="TIGR01036">
    <property type="entry name" value="pyrD_sub2"/>
    <property type="match status" value="1"/>
</dbReference>
<dbReference type="PANTHER" id="PTHR48109:SF4">
    <property type="entry name" value="DIHYDROOROTATE DEHYDROGENASE (QUINONE), MITOCHONDRIAL"/>
    <property type="match status" value="1"/>
</dbReference>
<dbReference type="PANTHER" id="PTHR48109">
    <property type="entry name" value="DIHYDROOROTATE DEHYDROGENASE (QUINONE), MITOCHONDRIAL-RELATED"/>
    <property type="match status" value="1"/>
</dbReference>
<dbReference type="Pfam" id="PF01180">
    <property type="entry name" value="DHO_dh"/>
    <property type="match status" value="1"/>
</dbReference>
<dbReference type="PIRSF" id="PIRSF000164">
    <property type="entry name" value="DHO_oxidase"/>
    <property type="match status" value="1"/>
</dbReference>
<dbReference type="SUPFAM" id="SSF51395">
    <property type="entry name" value="FMN-linked oxidoreductases"/>
    <property type="match status" value="1"/>
</dbReference>
<dbReference type="PROSITE" id="PS00911">
    <property type="entry name" value="DHODEHASE_1"/>
    <property type="match status" value="1"/>
</dbReference>
<dbReference type="PROSITE" id="PS00912">
    <property type="entry name" value="DHODEHASE_2"/>
    <property type="match status" value="1"/>
</dbReference>
<feature type="chain" id="PRO_1000024236" description="Dihydroorotate dehydrogenase (quinone)">
    <location>
        <begin position="1"/>
        <end position="336"/>
    </location>
</feature>
<feature type="active site" description="Nucleophile" evidence="1">
    <location>
        <position position="175"/>
    </location>
</feature>
<feature type="binding site" evidence="1">
    <location>
        <begin position="62"/>
        <end position="66"/>
    </location>
    <ligand>
        <name>FMN</name>
        <dbReference type="ChEBI" id="CHEBI:58210"/>
    </ligand>
</feature>
<feature type="binding site" evidence="1">
    <location>
        <position position="66"/>
    </location>
    <ligand>
        <name>substrate</name>
    </ligand>
</feature>
<feature type="binding site" evidence="1">
    <location>
        <position position="86"/>
    </location>
    <ligand>
        <name>FMN</name>
        <dbReference type="ChEBI" id="CHEBI:58210"/>
    </ligand>
</feature>
<feature type="binding site" evidence="1">
    <location>
        <begin position="111"/>
        <end position="115"/>
    </location>
    <ligand>
        <name>substrate</name>
    </ligand>
</feature>
<feature type="binding site" evidence="1">
    <location>
        <position position="139"/>
    </location>
    <ligand>
        <name>FMN</name>
        <dbReference type="ChEBI" id="CHEBI:58210"/>
    </ligand>
</feature>
<feature type="binding site" evidence="1">
    <location>
        <position position="172"/>
    </location>
    <ligand>
        <name>FMN</name>
        <dbReference type="ChEBI" id="CHEBI:58210"/>
    </ligand>
</feature>
<feature type="binding site" evidence="1">
    <location>
        <position position="172"/>
    </location>
    <ligand>
        <name>substrate</name>
    </ligand>
</feature>
<feature type="binding site" evidence="1">
    <location>
        <position position="177"/>
    </location>
    <ligand>
        <name>substrate</name>
    </ligand>
</feature>
<feature type="binding site" evidence="1">
    <location>
        <position position="217"/>
    </location>
    <ligand>
        <name>FMN</name>
        <dbReference type="ChEBI" id="CHEBI:58210"/>
    </ligand>
</feature>
<feature type="binding site" evidence="1">
    <location>
        <position position="245"/>
    </location>
    <ligand>
        <name>FMN</name>
        <dbReference type="ChEBI" id="CHEBI:58210"/>
    </ligand>
</feature>
<feature type="binding site" evidence="1">
    <location>
        <begin position="246"/>
        <end position="247"/>
    </location>
    <ligand>
        <name>substrate</name>
    </ligand>
</feature>
<feature type="binding site" evidence="1">
    <location>
        <position position="268"/>
    </location>
    <ligand>
        <name>FMN</name>
        <dbReference type="ChEBI" id="CHEBI:58210"/>
    </ligand>
</feature>
<feature type="binding site" evidence="1">
    <location>
        <position position="297"/>
    </location>
    <ligand>
        <name>FMN</name>
        <dbReference type="ChEBI" id="CHEBI:58210"/>
    </ligand>
</feature>
<feature type="binding site" evidence="1">
    <location>
        <begin position="318"/>
        <end position="319"/>
    </location>
    <ligand>
        <name>FMN</name>
        <dbReference type="ChEBI" id="CHEBI:58210"/>
    </ligand>
</feature>
<protein>
    <recommendedName>
        <fullName evidence="1">Dihydroorotate dehydrogenase (quinone)</fullName>
        <ecNumber evidence="1">1.3.5.2</ecNumber>
    </recommendedName>
    <alternativeName>
        <fullName evidence="1">DHOdehase</fullName>
        <shortName evidence="1">DHOD</shortName>
        <shortName evidence="1">DHODase</shortName>
    </alternativeName>
    <alternativeName>
        <fullName evidence="1">Dihydroorotate oxidase</fullName>
    </alternativeName>
</protein>
<name>PYRD_SODGM</name>
<evidence type="ECO:0000255" key="1">
    <source>
        <dbReference type="HAMAP-Rule" id="MF_00225"/>
    </source>
</evidence>
<organism>
    <name type="scientific">Sodalis glossinidius (strain morsitans)</name>
    <dbReference type="NCBI Taxonomy" id="343509"/>
    <lineage>
        <taxon>Bacteria</taxon>
        <taxon>Pseudomonadati</taxon>
        <taxon>Pseudomonadota</taxon>
        <taxon>Gammaproteobacteria</taxon>
        <taxon>Enterobacterales</taxon>
        <taxon>Bruguierivoracaceae</taxon>
        <taxon>Sodalis</taxon>
    </lineage>
</organism>